<gene>
    <name type="primary">luxA</name>
</gene>
<dbReference type="EC" id="1.14.14.3" evidence="2"/>
<dbReference type="EMBL" id="M65067">
    <property type="protein sequence ID" value="AAA70297.1"/>
    <property type="molecule type" value="Genomic_DNA"/>
</dbReference>
<dbReference type="EMBL" id="M64224">
    <property type="protein sequence ID" value="AAA25627.1"/>
    <property type="molecule type" value="Genomic_DNA"/>
</dbReference>
<dbReference type="PIR" id="JH0387">
    <property type="entry name" value="JH0387"/>
</dbReference>
<dbReference type="SMR" id="P24113"/>
<dbReference type="STRING" id="659.AYY26_10985"/>
<dbReference type="GO" id="GO:0005829">
    <property type="term" value="C:cytosol"/>
    <property type="evidence" value="ECO:0007669"/>
    <property type="project" value="TreeGrafter"/>
</dbReference>
<dbReference type="GO" id="GO:0047646">
    <property type="term" value="F:alkanal monooxygenase (FMN-linked) activity"/>
    <property type="evidence" value="ECO:0007669"/>
    <property type="project" value="UniProtKB-EC"/>
</dbReference>
<dbReference type="GO" id="GO:0008218">
    <property type="term" value="P:bioluminescence"/>
    <property type="evidence" value="ECO:0007669"/>
    <property type="project" value="UniProtKB-KW"/>
</dbReference>
<dbReference type="Gene3D" id="3.20.20.30">
    <property type="entry name" value="Luciferase-like domain"/>
    <property type="match status" value="1"/>
</dbReference>
<dbReference type="InterPro" id="IPR050766">
    <property type="entry name" value="Bact_Lucif_Oxidored"/>
</dbReference>
<dbReference type="InterPro" id="IPR018235">
    <property type="entry name" value="Bacterial_luciferase_CS"/>
</dbReference>
<dbReference type="InterPro" id="IPR011251">
    <property type="entry name" value="Luciferase-like_dom"/>
</dbReference>
<dbReference type="InterPro" id="IPR036661">
    <property type="entry name" value="Luciferase-like_sf"/>
</dbReference>
<dbReference type="InterPro" id="IPR002103">
    <property type="entry name" value="Luciferase_bac/NFP"/>
</dbReference>
<dbReference type="PANTHER" id="PTHR30137:SF8">
    <property type="entry name" value="BLR5498 PROTEIN"/>
    <property type="match status" value="1"/>
</dbReference>
<dbReference type="PANTHER" id="PTHR30137">
    <property type="entry name" value="LUCIFERASE-LIKE MONOOXYGENASE"/>
    <property type="match status" value="1"/>
</dbReference>
<dbReference type="Pfam" id="PF00296">
    <property type="entry name" value="Bac_luciferase"/>
    <property type="match status" value="1"/>
</dbReference>
<dbReference type="PRINTS" id="PR00089">
    <property type="entry name" value="LUCIFERASE"/>
</dbReference>
<dbReference type="SUPFAM" id="SSF51679">
    <property type="entry name" value="Bacterial luciferase-like"/>
    <property type="match status" value="1"/>
</dbReference>
<dbReference type="PROSITE" id="PS00494">
    <property type="entry name" value="BACTERIAL_LUCIFERASE"/>
    <property type="match status" value="1"/>
</dbReference>
<reference key="1">
    <citation type="journal article" date="1991" name="Biochem. Biophys. Res. Commun.">
        <title>Structure and properties of luciferase from Photobacterium phosphoreum.</title>
        <authorList>
            <person name="Ferri S.R."/>
            <person name="Soly R.R."/>
            <person name="Szittner R.B."/>
            <person name="Meighen E.A."/>
        </authorList>
    </citation>
    <scope>NUCLEOTIDE SEQUENCE [GENOMIC DNA]</scope>
    <scope>FUNCTION</scope>
    <scope>CATALYTIC ACTIVITY</scope>
</reference>
<reference key="2">
    <citation type="journal article" date="1991" name="J. Biol. Chem.">
        <title>A lux-specific myristoyl transferase in luminescent bacteria related to eukaryotic serine esterases.</title>
        <authorList>
            <person name="Ferri S.R."/>
            <person name="Meighen E.A."/>
        </authorList>
    </citation>
    <scope>NUCLEOTIDE SEQUENCE [GENOMIC DNA] OF 1-41</scope>
</reference>
<feature type="chain" id="PRO_0000220169" description="Alkanal monooxygenase alpha chain">
    <location>
        <begin position="1"/>
        <end position="346"/>
    </location>
</feature>
<feature type="sequence conflict" description="In Ref. 2; AAA25627." evidence="3" ref="2">
    <original>I</original>
    <variation>IC</variation>
    <location>
        <position position="6"/>
    </location>
</feature>
<feature type="sequence conflict" description="In Ref. 2; AAA25627." evidence="3" ref="2">
    <original>LE</original>
    <variation>TL</variation>
    <location>
        <begin position="40"/>
        <end position="41"/>
    </location>
</feature>
<accession>P24113</accession>
<sequence>MKFGNIFSYQPPGESHKEVMDRFVRLGVASEELNFDTYWLEHHFTEFGLTGNLFVACANLLGRTTKLNVGTMIVLPTAHPARQMEDLLLLDQMSKGRFNFGVVRGYHKDFRVFGVTMEDSRAITEDFHTMIMDGTKTGLHTDGKNIEFPDVNVYPEAYLEKIPTCMTAESATTTWLAERGLPMVLSWIITTSEKKAQMELYNAVRDSGYSEEYIKNVDHSMTLICSVDEDGKKAEDVREFLGNWYDSYVNATNIFSESNQTRGYDYHKGQKDFVLQGHTNTKRRVDYSNDLNPVGTPEKCIEIQRDIDATGITNITLGFEANGSEEEIIASMKRFMQVAPFLKDPK</sequence>
<name>LUXA_PHOPO</name>
<organism>
    <name type="scientific">Photobacterium phosphoreum</name>
    <dbReference type="NCBI Taxonomy" id="659"/>
    <lineage>
        <taxon>Bacteria</taxon>
        <taxon>Pseudomonadati</taxon>
        <taxon>Pseudomonadota</taxon>
        <taxon>Gammaproteobacteria</taxon>
        <taxon>Vibrionales</taxon>
        <taxon>Vibrionaceae</taxon>
        <taxon>Photobacterium</taxon>
    </lineage>
</organism>
<keyword id="KW-0285">Flavoprotein</keyword>
<keyword id="KW-0288">FMN</keyword>
<keyword id="KW-0455">Luminescence</keyword>
<keyword id="KW-0503">Monooxygenase</keyword>
<keyword id="KW-0560">Oxidoreductase</keyword>
<keyword id="KW-0599">Photoprotein</keyword>
<evidence type="ECO:0000250" key="1">
    <source>
        <dbReference type="UniProtKB" id="P07740"/>
    </source>
</evidence>
<evidence type="ECO:0000269" key="2">
    <source>
    </source>
</evidence>
<evidence type="ECO:0000305" key="3"/>
<comment type="function">
    <text evidence="2">Light-emitting reaction in luminous bacteria.</text>
</comment>
<comment type="catalytic activity">
    <reaction evidence="2">
        <text>a long-chain fatty aldehyde + FMNH2 + O2 = a long-chain fatty acid + hnu + FMN + H2O + 2 H(+)</text>
        <dbReference type="Rhea" id="RHEA:17181"/>
        <dbReference type="ChEBI" id="CHEBI:15377"/>
        <dbReference type="ChEBI" id="CHEBI:15378"/>
        <dbReference type="ChEBI" id="CHEBI:15379"/>
        <dbReference type="ChEBI" id="CHEBI:17176"/>
        <dbReference type="ChEBI" id="CHEBI:30212"/>
        <dbReference type="ChEBI" id="CHEBI:57560"/>
        <dbReference type="ChEBI" id="CHEBI:57618"/>
        <dbReference type="ChEBI" id="CHEBI:58210"/>
        <dbReference type="EC" id="1.14.14.3"/>
    </reaction>
</comment>
<comment type="subunit">
    <text evidence="1">Heterodimer of an alpha and a beta chain.</text>
</comment>
<protein>
    <recommendedName>
        <fullName>Alkanal monooxygenase alpha chain</fullName>
        <ecNumber evidence="2">1.14.14.3</ecNumber>
    </recommendedName>
    <alternativeName>
        <fullName>Bacterial luciferase alpha chain</fullName>
    </alternativeName>
</protein>
<proteinExistence type="evidence at protein level"/>